<name>CRTP_STAAB</name>
<sequence length="497" mass="57214">MTKHIIVIGGGLGGISAAIRMAQSGYSVSLYEQNNHIGGKVNRHESDGFGFDLGPSILTMPYIFEKLFEYSKKQMSDYVTIKRLPHQWRSFFPDGTTIDLYEGIKETGQHNAILSKKDIEELQNYLNYTRRIDRITEKGYFNYGLDTLSQIIKFHGPLNALINYDYVHTMQQAIDKRISNPYLRQMLGYFIKYVGSSSYDAPAVLSMLFHMQQEQGLWYVEGGIHHLANALEKLAREEGVTIHTGTRVDNIKIYQRHVTGVRLDTGEFVKADYIISNMEVIPTYKYLLHLGTQRLNKLEREFEPASSGYVMHLGVACQYPQLEHHNFFFTENAYLNYQQVFHEKVLPDDPTIYLVNTNKTDHTQAPVGYENIKVLPHIPYIQDQPFTTEDYAKFRDKILDKLEKMGLTDLRKHIIYEDVWTPEDIEKNYRSNRGAIYGVVADKKKNKGFKFTKESQYFENLYFVGGSVNPGGGMPMVTLSGQQVADKINAREAKNRK</sequence>
<feature type="chain" id="PRO_0000285224" description="4,4'-diaponeurosporene oxygenase">
    <location>
        <begin position="1"/>
        <end position="497"/>
    </location>
</feature>
<feature type="binding site" evidence="3">
    <location>
        <begin position="7"/>
        <end position="19"/>
    </location>
    <ligand>
        <name>FAD</name>
        <dbReference type="ChEBI" id="CHEBI:57692"/>
    </ligand>
</feature>
<evidence type="ECO:0000250" key="1">
    <source>
        <dbReference type="UniProtKB" id="P21685"/>
    </source>
</evidence>
<evidence type="ECO:0000250" key="2">
    <source>
        <dbReference type="UniProtKB" id="Q2FV57"/>
    </source>
</evidence>
<evidence type="ECO:0000255" key="3"/>
<gene>
    <name evidence="2" type="primary">crtP</name>
    <name type="ordered locus">SAB2437c</name>
</gene>
<protein>
    <recommendedName>
        <fullName evidence="2">4,4'-diaponeurosporene oxygenase</fullName>
        <ecNumber evidence="2">1.14.99.-</ecNumber>
    </recommendedName>
    <alternativeName>
        <fullName evidence="2">4,4'-diaponeurosporene oxidase</fullName>
    </alternativeName>
    <alternativeName>
        <fullName evidence="2">Carotenoid oxidase</fullName>
    </alternativeName>
</protein>
<reference key="1">
    <citation type="journal article" date="2007" name="PLoS ONE">
        <title>Molecular correlates of host specialization in Staphylococcus aureus.</title>
        <authorList>
            <person name="Herron-Olson L."/>
            <person name="Fitzgerald J.R."/>
            <person name="Musser J.M."/>
            <person name="Kapur V."/>
        </authorList>
    </citation>
    <scope>NUCLEOTIDE SEQUENCE [LARGE SCALE GENOMIC DNA]</scope>
    <source>
        <strain>bovine RF122 / ET3-1</strain>
    </source>
</reference>
<proteinExistence type="inferred from homology"/>
<comment type="function">
    <text evidence="2">Involved in the biosynthesis of the yellow-orange carotenoid staphyloxanthin, which plays a role in the virulence via its protective function against oxidative stress. Catalyzes the oxidation of the terminal methyl side group of 4,4'-diaponeurosporene to form 4,4'-diaponeurosporen-4-al.</text>
</comment>
<comment type="catalytic activity">
    <reaction evidence="2">
        <text>all-trans-4,4'-diaponeurosporene + 2 AH2 + 2 O2 = 4,4'-diaponeurosporenal + 2 A + 3 H2O</text>
        <dbReference type="Rhea" id="RHEA:56104"/>
        <dbReference type="ChEBI" id="CHEBI:13193"/>
        <dbReference type="ChEBI" id="CHEBI:15377"/>
        <dbReference type="ChEBI" id="CHEBI:15379"/>
        <dbReference type="ChEBI" id="CHEBI:17499"/>
        <dbReference type="ChEBI" id="CHEBI:62743"/>
        <dbReference type="ChEBI" id="CHEBI:79065"/>
    </reaction>
</comment>
<comment type="cofactor">
    <cofactor evidence="1">
        <name>FAD</name>
        <dbReference type="ChEBI" id="CHEBI:57692"/>
    </cofactor>
</comment>
<comment type="pathway">
    <text evidence="2">Carotenoid biosynthesis; staphyloxanthin biosynthesis; staphyloxanthin from farnesyl diphosphate: step 3/5.</text>
</comment>
<comment type="similarity">
    <text evidence="2">Belongs to the carotenoid/retinoid oxidoreductase family. CrtP subfamily.</text>
</comment>
<organism>
    <name type="scientific">Staphylococcus aureus (strain bovine RF122 / ET3-1)</name>
    <dbReference type="NCBI Taxonomy" id="273036"/>
    <lineage>
        <taxon>Bacteria</taxon>
        <taxon>Bacillati</taxon>
        <taxon>Bacillota</taxon>
        <taxon>Bacilli</taxon>
        <taxon>Bacillales</taxon>
        <taxon>Staphylococcaceae</taxon>
        <taxon>Staphylococcus</taxon>
    </lineage>
</organism>
<keyword id="KW-0125">Carotenoid biosynthesis</keyword>
<keyword id="KW-0274">FAD</keyword>
<keyword id="KW-0285">Flavoprotein</keyword>
<keyword id="KW-0560">Oxidoreductase</keyword>
<keyword id="KW-0843">Virulence</keyword>
<accession>Q2YWE5</accession>
<dbReference type="EC" id="1.14.99.-" evidence="2"/>
<dbReference type="EMBL" id="AJ938182">
    <property type="protein sequence ID" value="CAI82125.1"/>
    <property type="molecule type" value="Genomic_DNA"/>
</dbReference>
<dbReference type="RefSeq" id="WP_000160451.1">
    <property type="nucleotide sequence ID" value="NC_007622.1"/>
</dbReference>
<dbReference type="SMR" id="Q2YWE5"/>
<dbReference type="KEGG" id="sab:SAB2437c"/>
<dbReference type="HOGENOM" id="CLU_019722_2_1_9"/>
<dbReference type="UniPathway" id="UPA00029">
    <property type="reaction ID" value="UER00558"/>
</dbReference>
<dbReference type="GO" id="GO:0016491">
    <property type="term" value="F:oxidoreductase activity"/>
    <property type="evidence" value="ECO:0007669"/>
    <property type="project" value="UniProtKB-KW"/>
</dbReference>
<dbReference type="GO" id="GO:0016117">
    <property type="term" value="P:carotenoid biosynthetic process"/>
    <property type="evidence" value="ECO:0007669"/>
    <property type="project" value="UniProtKB-KW"/>
</dbReference>
<dbReference type="Gene3D" id="3.50.50.60">
    <property type="entry name" value="FAD/NAD(P)-binding domain"/>
    <property type="match status" value="2"/>
</dbReference>
<dbReference type="InterPro" id="IPR002937">
    <property type="entry name" value="Amino_oxidase"/>
</dbReference>
<dbReference type="InterPro" id="IPR014105">
    <property type="entry name" value="Carotenoid/retinoid_OxRdtase"/>
</dbReference>
<dbReference type="InterPro" id="IPR036188">
    <property type="entry name" value="FAD/NAD-bd_sf"/>
</dbReference>
<dbReference type="NCBIfam" id="TIGR02734">
    <property type="entry name" value="crtI_fam"/>
    <property type="match status" value="1"/>
</dbReference>
<dbReference type="PANTHER" id="PTHR43734:SF7">
    <property type="entry name" value="4,4'-DIAPONEUROSPORENE OXYGENASE"/>
    <property type="match status" value="1"/>
</dbReference>
<dbReference type="PANTHER" id="PTHR43734">
    <property type="entry name" value="PHYTOENE DESATURASE"/>
    <property type="match status" value="1"/>
</dbReference>
<dbReference type="Pfam" id="PF01593">
    <property type="entry name" value="Amino_oxidase"/>
    <property type="match status" value="1"/>
</dbReference>
<dbReference type="SUPFAM" id="SSF51905">
    <property type="entry name" value="FAD/NAD(P)-binding domain"/>
    <property type="match status" value="1"/>
</dbReference>